<comment type="function">
    <text evidence="2">One of the primary rRNA binding proteins, it binds directly to 16S rRNA where it helps nucleate assembly of the platform of the 30S subunit by binding and bridging several RNA helices of the 16S rRNA.</text>
</comment>
<comment type="function">
    <text evidence="2">Forms an intersubunit bridge (bridge B4) with the 23S rRNA of the 50S subunit in the ribosome.</text>
</comment>
<comment type="subunit">
    <text evidence="2">Part of the 30S ribosomal subunit. Forms a bridge to the 50S subunit in the 70S ribosome, contacting the 23S rRNA.</text>
</comment>
<comment type="similarity">
    <text evidence="2">Belongs to the universal ribosomal protein uS15 family.</text>
</comment>
<name>RS15_SHIFL</name>
<proteinExistence type="inferred from homology"/>
<feature type="initiator methionine" description="Removed" evidence="1">
    <location>
        <position position="1"/>
    </location>
</feature>
<feature type="chain" id="PRO_0000115536" description="Small ribosomal subunit protein uS15">
    <location>
        <begin position="2"/>
        <end position="89"/>
    </location>
</feature>
<reference key="1">
    <citation type="journal article" date="2002" name="Nucleic Acids Res.">
        <title>Genome sequence of Shigella flexneri 2a: insights into pathogenicity through comparison with genomes of Escherichia coli K12 and O157.</title>
        <authorList>
            <person name="Jin Q."/>
            <person name="Yuan Z."/>
            <person name="Xu J."/>
            <person name="Wang Y."/>
            <person name="Shen Y."/>
            <person name="Lu W."/>
            <person name="Wang J."/>
            <person name="Liu H."/>
            <person name="Yang J."/>
            <person name="Yang F."/>
            <person name="Zhang X."/>
            <person name="Zhang J."/>
            <person name="Yang G."/>
            <person name="Wu H."/>
            <person name="Qu D."/>
            <person name="Dong J."/>
            <person name="Sun L."/>
            <person name="Xue Y."/>
            <person name="Zhao A."/>
            <person name="Gao Y."/>
            <person name="Zhu J."/>
            <person name="Kan B."/>
            <person name="Ding K."/>
            <person name="Chen S."/>
            <person name="Cheng H."/>
            <person name="Yao Z."/>
            <person name="He B."/>
            <person name="Chen R."/>
            <person name="Ma D."/>
            <person name="Qiang B."/>
            <person name="Wen Y."/>
            <person name="Hou Y."/>
            <person name="Yu J."/>
        </authorList>
    </citation>
    <scope>NUCLEOTIDE SEQUENCE [LARGE SCALE GENOMIC DNA]</scope>
    <source>
        <strain>301 / Serotype 2a</strain>
    </source>
</reference>
<reference key="2">
    <citation type="journal article" date="2003" name="Infect. Immun.">
        <title>Complete genome sequence and comparative genomics of Shigella flexneri serotype 2a strain 2457T.</title>
        <authorList>
            <person name="Wei J."/>
            <person name="Goldberg M.B."/>
            <person name="Burland V."/>
            <person name="Venkatesan M.M."/>
            <person name="Deng W."/>
            <person name="Fournier G."/>
            <person name="Mayhew G.F."/>
            <person name="Plunkett G. III"/>
            <person name="Rose D.J."/>
            <person name="Darling A."/>
            <person name="Mau B."/>
            <person name="Perna N.T."/>
            <person name="Payne S.M."/>
            <person name="Runyen-Janecky L.J."/>
            <person name="Zhou S."/>
            <person name="Schwartz D.C."/>
            <person name="Blattner F.R."/>
        </authorList>
    </citation>
    <scope>NUCLEOTIDE SEQUENCE [LARGE SCALE GENOMIC DNA]</scope>
    <source>
        <strain>ATCC 700930 / 2457T / Serotype 2a</strain>
    </source>
</reference>
<organism>
    <name type="scientific">Shigella flexneri</name>
    <dbReference type="NCBI Taxonomy" id="623"/>
    <lineage>
        <taxon>Bacteria</taxon>
        <taxon>Pseudomonadati</taxon>
        <taxon>Pseudomonadota</taxon>
        <taxon>Gammaproteobacteria</taxon>
        <taxon>Enterobacterales</taxon>
        <taxon>Enterobacteriaceae</taxon>
        <taxon>Shigella</taxon>
    </lineage>
</organism>
<protein>
    <recommendedName>
        <fullName evidence="2">Small ribosomal subunit protein uS15</fullName>
    </recommendedName>
    <alternativeName>
        <fullName evidence="3">30S ribosomal protein S15</fullName>
    </alternativeName>
</protein>
<sequence length="89" mass="10269">MSLSTEATAKIVSEFGRDANDTGSTEVQVALLTAQINHLQGHFAEHKKDHHSRRGLLRMVSQRRKLLDYLKRKDVARYTQLIERLGLRR</sequence>
<dbReference type="EMBL" id="AE005674">
    <property type="protein sequence ID" value="AAN44673.1"/>
    <property type="molecule type" value="Genomic_DNA"/>
</dbReference>
<dbReference type="EMBL" id="AE014073">
    <property type="protein sequence ID" value="AAP18487.1"/>
    <property type="molecule type" value="Genomic_DNA"/>
</dbReference>
<dbReference type="RefSeq" id="NP_708966.1">
    <property type="nucleotide sequence ID" value="NC_004337.2"/>
</dbReference>
<dbReference type="RefSeq" id="WP_000059466.1">
    <property type="nucleotide sequence ID" value="NZ_WPGW01000004.1"/>
</dbReference>
<dbReference type="SMR" id="P0ADZ6"/>
<dbReference type="STRING" id="198214.SF3206"/>
<dbReference type="PaxDb" id="198214-SF3206"/>
<dbReference type="GeneID" id="1027108"/>
<dbReference type="GeneID" id="93778818"/>
<dbReference type="KEGG" id="sfl:SF3206"/>
<dbReference type="KEGG" id="sfx:S3423"/>
<dbReference type="PATRIC" id="fig|198214.7.peg.3806"/>
<dbReference type="HOGENOM" id="CLU_148518_0_0_6"/>
<dbReference type="Proteomes" id="UP000001006">
    <property type="component" value="Chromosome"/>
</dbReference>
<dbReference type="Proteomes" id="UP000002673">
    <property type="component" value="Chromosome"/>
</dbReference>
<dbReference type="GO" id="GO:0022627">
    <property type="term" value="C:cytosolic small ribosomal subunit"/>
    <property type="evidence" value="ECO:0007669"/>
    <property type="project" value="TreeGrafter"/>
</dbReference>
<dbReference type="GO" id="GO:0019843">
    <property type="term" value="F:rRNA binding"/>
    <property type="evidence" value="ECO:0007669"/>
    <property type="project" value="UniProtKB-UniRule"/>
</dbReference>
<dbReference type="GO" id="GO:0003735">
    <property type="term" value="F:structural constituent of ribosome"/>
    <property type="evidence" value="ECO:0007669"/>
    <property type="project" value="InterPro"/>
</dbReference>
<dbReference type="GO" id="GO:0006412">
    <property type="term" value="P:translation"/>
    <property type="evidence" value="ECO:0007669"/>
    <property type="project" value="UniProtKB-UniRule"/>
</dbReference>
<dbReference type="CDD" id="cd00353">
    <property type="entry name" value="Ribosomal_S15p_S13e"/>
    <property type="match status" value="1"/>
</dbReference>
<dbReference type="FunFam" id="1.10.287.10:FF:000002">
    <property type="entry name" value="30S ribosomal protein S15"/>
    <property type="match status" value="1"/>
</dbReference>
<dbReference type="Gene3D" id="6.10.250.3130">
    <property type="match status" value="1"/>
</dbReference>
<dbReference type="Gene3D" id="1.10.287.10">
    <property type="entry name" value="S15/NS1, RNA-binding"/>
    <property type="match status" value="1"/>
</dbReference>
<dbReference type="HAMAP" id="MF_01343_B">
    <property type="entry name" value="Ribosomal_uS15_B"/>
    <property type="match status" value="1"/>
</dbReference>
<dbReference type="InterPro" id="IPR000589">
    <property type="entry name" value="Ribosomal_uS15"/>
</dbReference>
<dbReference type="InterPro" id="IPR005290">
    <property type="entry name" value="Ribosomal_uS15_bac-type"/>
</dbReference>
<dbReference type="InterPro" id="IPR009068">
    <property type="entry name" value="uS15_NS1_RNA-bd_sf"/>
</dbReference>
<dbReference type="NCBIfam" id="TIGR00952">
    <property type="entry name" value="S15_bact"/>
    <property type="match status" value="1"/>
</dbReference>
<dbReference type="PANTHER" id="PTHR23321">
    <property type="entry name" value="RIBOSOMAL PROTEIN S15, BACTERIAL AND ORGANELLAR"/>
    <property type="match status" value="1"/>
</dbReference>
<dbReference type="PANTHER" id="PTHR23321:SF26">
    <property type="entry name" value="SMALL RIBOSOMAL SUBUNIT PROTEIN US15M"/>
    <property type="match status" value="1"/>
</dbReference>
<dbReference type="Pfam" id="PF00312">
    <property type="entry name" value="Ribosomal_S15"/>
    <property type="match status" value="1"/>
</dbReference>
<dbReference type="SMART" id="SM01387">
    <property type="entry name" value="Ribosomal_S15"/>
    <property type="match status" value="1"/>
</dbReference>
<dbReference type="SUPFAM" id="SSF47060">
    <property type="entry name" value="S15/NS1 RNA-binding domain"/>
    <property type="match status" value="1"/>
</dbReference>
<dbReference type="PROSITE" id="PS00362">
    <property type="entry name" value="RIBOSOMAL_S15"/>
    <property type="match status" value="1"/>
</dbReference>
<gene>
    <name evidence="2" type="primary">rpsO</name>
    <name type="ordered locus">SF3206</name>
    <name type="ordered locus">S3423</name>
</gene>
<accession>P0ADZ6</accession>
<accession>P02371</accession>
<evidence type="ECO:0000250" key="1"/>
<evidence type="ECO:0000255" key="2">
    <source>
        <dbReference type="HAMAP-Rule" id="MF_01343"/>
    </source>
</evidence>
<evidence type="ECO:0000305" key="3"/>
<keyword id="KW-1185">Reference proteome</keyword>
<keyword id="KW-0687">Ribonucleoprotein</keyword>
<keyword id="KW-0689">Ribosomal protein</keyword>
<keyword id="KW-0694">RNA-binding</keyword>
<keyword id="KW-0699">rRNA-binding</keyword>